<protein>
    <recommendedName>
        <fullName evidence="1">Probable phosphatase YcdX</fullName>
        <ecNumber evidence="1">3.1.3.-</ecNumber>
    </recommendedName>
</protein>
<gene>
    <name evidence="1" type="primary">ycdX</name>
    <name type="ordered locus">ECED1_1178</name>
</gene>
<reference key="1">
    <citation type="journal article" date="2009" name="PLoS Genet.">
        <title>Organised genome dynamics in the Escherichia coli species results in highly diverse adaptive paths.</title>
        <authorList>
            <person name="Touchon M."/>
            <person name="Hoede C."/>
            <person name="Tenaillon O."/>
            <person name="Barbe V."/>
            <person name="Baeriswyl S."/>
            <person name="Bidet P."/>
            <person name="Bingen E."/>
            <person name="Bonacorsi S."/>
            <person name="Bouchier C."/>
            <person name="Bouvet O."/>
            <person name="Calteau A."/>
            <person name="Chiapello H."/>
            <person name="Clermont O."/>
            <person name="Cruveiller S."/>
            <person name="Danchin A."/>
            <person name="Diard M."/>
            <person name="Dossat C."/>
            <person name="Karoui M.E."/>
            <person name="Frapy E."/>
            <person name="Garry L."/>
            <person name="Ghigo J.M."/>
            <person name="Gilles A.M."/>
            <person name="Johnson J."/>
            <person name="Le Bouguenec C."/>
            <person name="Lescat M."/>
            <person name="Mangenot S."/>
            <person name="Martinez-Jehanne V."/>
            <person name="Matic I."/>
            <person name="Nassif X."/>
            <person name="Oztas S."/>
            <person name="Petit M.A."/>
            <person name="Pichon C."/>
            <person name="Rouy Z."/>
            <person name="Ruf C.S."/>
            <person name="Schneider D."/>
            <person name="Tourret J."/>
            <person name="Vacherie B."/>
            <person name="Vallenet D."/>
            <person name="Medigue C."/>
            <person name="Rocha E.P.C."/>
            <person name="Denamur E."/>
        </authorList>
    </citation>
    <scope>NUCLEOTIDE SEQUENCE [LARGE SCALE GENOMIC DNA]</scope>
    <source>
        <strain>ED1a</strain>
    </source>
</reference>
<dbReference type="EC" id="3.1.3.-" evidence="1"/>
<dbReference type="EMBL" id="CU928162">
    <property type="protein sequence ID" value="CAR07379.1"/>
    <property type="molecule type" value="Genomic_DNA"/>
</dbReference>
<dbReference type="RefSeq" id="WP_000283659.1">
    <property type="nucleotide sequence ID" value="NC_011745.1"/>
</dbReference>
<dbReference type="SMR" id="B7MTG5"/>
<dbReference type="KEGG" id="ecq:ECED1_1178"/>
<dbReference type="HOGENOM" id="CLU_061999_0_1_6"/>
<dbReference type="Proteomes" id="UP000000748">
    <property type="component" value="Chromosome"/>
</dbReference>
<dbReference type="GO" id="GO:0005829">
    <property type="term" value="C:cytosol"/>
    <property type="evidence" value="ECO:0007669"/>
    <property type="project" value="TreeGrafter"/>
</dbReference>
<dbReference type="GO" id="GO:0016791">
    <property type="term" value="F:phosphatase activity"/>
    <property type="evidence" value="ECO:0007669"/>
    <property type="project" value="UniProtKB-UniRule"/>
</dbReference>
<dbReference type="GO" id="GO:0008270">
    <property type="term" value="F:zinc ion binding"/>
    <property type="evidence" value="ECO:0007669"/>
    <property type="project" value="UniProtKB-UniRule"/>
</dbReference>
<dbReference type="GO" id="GO:0071978">
    <property type="term" value="P:bacterial-type flagellum-dependent swarming motility"/>
    <property type="evidence" value="ECO:0007669"/>
    <property type="project" value="TreeGrafter"/>
</dbReference>
<dbReference type="CDD" id="cd07437">
    <property type="entry name" value="PHP_HisPPase_Ycdx_like"/>
    <property type="match status" value="1"/>
</dbReference>
<dbReference type="FunFam" id="3.20.20.140:FF:000008">
    <property type="entry name" value="Probable phosphatase YcdX"/>
    <property type="match status" value="1"/>
</dbReference>
<dbReference type="Gene3D" id="3.20.20.140">
    <property type="entry name" value="Metal-dependent hydrolases"/>
    <property type="match status" value="1"/>
</dbReference>
<dbReference type="HAMAP" id="MF_01561">
    <property type="entry name" value="YcdX_phosphat"/>
    <property type="match status" value="1"/>
</dbReference>
<dbReference type="InterPro" id="IPR023710">
    <property type="entry name" value="Phosphatase_YcdX_put"/>
</dbReference>
<dbReference type="InterPro" id="IPR004013">
    <property type="entry name" value="PHP_dom"/>
</dbReference>
<dbReference type="InterPro" id="IPR050243">
    <property type="entry name" value="PHP_phosphatase"/>
</dbReference>
<dbReference type="InterPro" id="IPR003141">
    <property type="entry name" value="Pol/His_phosphatase_N"/>
</dbReference>
<dbReference type="InterPro" id="IPR016195">
    <property type="entry name" value="Pol/histidinol_Pase-like"/>
</dbReference>
<dbReference type="NCBIfam" id="NF006702">
    <property type="entry name" value="PRK09248.1"/>
    <property type="match status" value="1"/>
</dbReference>
<dbReference type="PANTHER" id="PTHR36928">
    <property type="entry name" value="PHOSPHATASE YCDX-RELATED"/>
    <property type="match status" value="1"/>
</dbReference>
<dbReference type="PANTHER" id="PTHR36928:SF1">
    <property type="entry name" value="PHOSPHATASE YCDX-RELATED"/>
    <property type="match status" value="1"/>
</dbReference>
<dbReference type="Pfam" id="PF02811">
    <property type="entry name" value="PHP"/>
    <property type="match status" value="1"/>
</dbReference>
<dbReference type="SMART" id="SM00481">
    <property type="entry name" value="POLIIIAc"/>
    <property type="match status" value="1"/>
</dbReference>
<dbReference type="SUPFAM" id="SSF89550">
    <property type="entry name" value="PHP domain-like"/>
    <property type="match status" value="1"/>
</dbReference>
<evidence type="ECO:0000255" key="1">
    <source>
        <dbReference type="HAMAP-Rule" id="MF_01561"/>
    </source>
</evidence>
<proteinExistence type="inferred from homology"/>
<organism>
    <name type="scientific">Escherichia coli O81 (strain ED1a)</name>
    <dbReference type="NCBI Taxonomy" id="585397"/>
    <lineage>
        <taxon>Bacteria</taxon>
        <taxon>Pseudomonadati</taxon>
        <taxon>Pseudomonadota</taxon>
        <taxon>Gammaproteobacteria</taxon>
        <taxon>Enterobacterales</taxon>
        <taxon>Enterobacteriaceae</taxon>
        <taxon>Escherichia</taxon>
    </lineage>
</organism>
<comment type="cofactor">
    <cofactor evidence="1">
        <name>Zn(2+)</name>
        <dbReference type="ChEBI" id="CHEBI:29105"/>
    </cofactor>
    <text evidence="1">Binds 3 Zn(2+) ions per subunit.</text>
</comment>
<comment type="subunit">
    <text evidence="1">Homotrimer.</text>
</comment>
<comment type="similarity">
    <text evidence="1">Belongs to the PHP family.</text>
</comment>
<sequence length="245" mass="26893">MYPVDLHMHTVASTHAYSTLSDYIAQAKQKGIKLFAITDHGPDMEDAPHHWHFINMRIWPRVVDGVGILRGIEANIKNVDGEIDCSGKMFDSLDLIIAGFHEPVFAPHDKATNTKSMIATIASGNVHIISHPGNPRYPIDFKAVAEAAAKHQVALEINNSSFLHSRKGSEDNCRAVAAAVRDAGGWVALGSDSHTAFTMGEFEECLKILDAVDFPPERILNVSPRRLLNFLESRGMAPIAEFADL</sequence>
<keyword id="KW-0378">Hydrolase</keyword>
<keyword id="KW-0479">Metal-binding</keyword>
<keyword id="KW-0862">Zinc</keyword>
<feature type="chain" id="PRO_1000185432" description="Probable phosphatase YcdX">
    <location>
        <begin position="1"/>
        <end position="245"/>
    </location>
</feature>
<feature type="binding site" evidence="1">
    <location>
        <position position="7"/>
    </location>
    <ligand>
        <name>Zn(2+)</name>
        <dbReference type="ChEBI" id="CHEBI:29105"/>
        <label>1</label>
    </ligand>
</feature>
<feature type="binding site" evidence="1">
    <location>
        <position position="9"/>
    </location>
    <ligand>
        <name>Zn(2+)</name>
        <dbReference type="ChEBI" id="CHEBI:29105"/>
        <label>1</label>
    </ligand>
</feature>
<feature type="binding site" evidence="1">
    <location>
        <position position="15"/>
    </location>
    <ligand>
        <name>Zn(2+)</name>
        <dbReference type="ChEBI" id="CHEBI:29105"/>
        <label>2</label>
    </ligand>
</feature>
<feature type="binding site" evidence="1">
    <location>
        <position position="40"/>
    </location>
    <ligand>
        <name>Zn(2+)</name>
        <dbReference type="ChEBI" id="CHEBI:29105"/>
        <label>2</label>
    </ligand>
</feature>
<feature type="binding site" evidence="1">
    <location>
        <position position="73"/>
    </location>
    <ligand>
        <name>Zn(2+)</name>
        <dbReference type="ChEBI" id="CHEBI:29105"/>
        <label>1</label>
    </ligand>
</feature>
<feature type="binding site" evidence="1">
    <location>
        <position position="73"/>
    </location>
    <ligand>
        <name>Zn(2+)</name>
        <dbReference type="ChEBI" id="CHEBI:29105"/>
        <label>3</label>
    </ligand>
</feature>
<feature type="binding site" evidence="1">
    <location>
        <position position="101"/>
    </location>
    <ligand>
        <name>Zn(2+)</name>
        <dbReference type="ChEBI" id="CHEBI:29105"/>
        <label>3</label>
    </ligand>
</feature>
<feature type="binding site" evidence="1">
    <location>
        <position position="131"/>
    </location>
    <ligand>
        <name>Zn(2+)</name>
        <dbReference type="ChEBI" id="CHEBI:29105"/>
        <label>3</label>
    </ligand>
</feature>
<feature type="binding site" evidence="1">
    <location>
        <position position="192"/>
    </location>
    <ligand>
        <name>Zn(2+)</name>
        <dbReference type="ChEBI" id="CHEBI:29105"/>
        <label>1</label>
    </ligand>
</feature>
<feature type="binding site" evidence="1">
    <location>
        <position position="194"/>
    </location>
    <ligand>
        <name>Zn(2+)</name>
        <dbReference type="ChEBI" id="CHEBI:29105"/>
        <label>2</label>
    </ligand>
</feature>
<name>YCDX_ECO81</name>
<accession>B7MTG5</accession>